<sequence>MIDWITSQGHDIFGMYWTPLWILIRAVLIVVPVLLCVAYLILWERKLIGWMHVRIGPNRVGPLGLLQPIADVLKLLLKEVMFPSQINRGMYLVAPLMVLMPAVAVWAVIPFQAEVVMADINAGLLYVMAISSVGVYGVILAGWASNSKYAFIGAMRAAAQMVSYEIAMGFALVTVLMVSGSLNLSHIVNAQNTGYFANMGLNLLSWNWLPLLPMFGVYFISGVAETNRHPFDVVEGESEIVAGHMIEYSGMTFALFFLAEYINMIIISTMTSLMFLGGWAPPFSSALTNAIPGFFWLVIKVFLLLSVFIWIRASFPRYRYDQIMRLGWKIFIPLTVAWLIIVAIWIKSPWNIWH</sequence>
<proteinExistence type="inferred from homology"/>
<reference key="1">
    <citation type="journal article" date="2010" name="PLoS ONE">
        <title>The complete genome sequence of Cupriavidus metallidurans strain CH34, a master survivalist in harsh and anthropogenic environments.</title>
        <authorList>
            <person name="Janssen P.J."/>
            <person name="Van Houdt R."/>
            <person name="Moors H."/>
            <person name="Monsieurs P."/>
            <person name="Morin N."/>
            <person name="Michaux A."/>
            <person name="Benotmane M.A."/>
            <person name="Leys N."/>
            <person name="Vallaeys T."/>
            <person name="Lapidus A."/>
            <person name="Monchy S."/>
            <person name="Medigue C."/>
            <person name="Taghavi S."/>
            <person name="McCorkle S."/>
            <person name="Dunn J."/>
            <person name="van der Lelie D."/>
            <person name="Mergeay M."/>
        </authorList>
    </citation>
    <scope>NUCLEOTIDE SEQUENCE [LARGE SCALE GENOMIC DNA]</scope>
    <source>
        <strain>ATCC 43123 / DSM 2839 / NBRC 102507 / CH34</strain>
    </source>
</reference>
<gene>
    <name evidence="1" type="primary">nuoH</name>
    <name type="ordered locus">Rmet_0934</name>
</gene>
<accession>Q1LPV6</accession>
<comment type="function">
    <text evidence="1">NDH-1 shuttles electrons from NADH, via FMN and iron-sulfur (Fe-S) centers, to quinones in the respiratory chain. The immediate electron acceptor for the enzyme in this species is believed to be ubiquinone. Couples the redox reaction to proton translocation (for every two electrons transferred, four hydrogen ions are translocated across the cytoplasmic membrane), and thus conserves the redox energy in a proton gradient. This subunit may bind ubiquinone.</text>
</comment>
<comment type="catalytic activity">
    <reaction evidence="1">
        <text>a quinone + NADH + 5 H(+)(in) = a quinol + NAD(+) + 4 H(+)(out)</text>
        <dbReference type="Rhea" id="RHEA:57888"/>
        <dbReference type="ChEBI" id="CHEBI:15378"/>
        <dbReference type="ChEBI" id="CHEBI:24646"/>
        <dbReference type="ChEBI" id="CHEBI:57540"/>
        <dbReference type="ChEBI" id="CHEBI:57945"/>
        <dbReference type="ChEBI" id="CHEBI:132124"/>
    </reaction>
</comment>
<comment type="subunit">
    <text evidence="1">NDH-1 is composed of 14 different subunits. Subunits NuoA, H, J, K, L, M, N constitute the membrane sector of the complex.</text>
</comment>
<comment type="subcellular location">
    <subcellularLocation>
        <location evidence="1">Cell inner membrane</location>
        <topology evidence="1">Multi-pass membrane protein</topology>
    </subcellularLocation>
</comment>
<comment type="similarity">
    <text evidence="1">Belongs to the complex I subunit 1 family.</text>
</comment>
<organism>
    <name type="scientific">Cupriavidus metallidurans (strain ATCC 43123 / DSM 2839 / NBRC 102507 / CH34)</name>
    <name type="common">Ralstonia metallidurans</name>
    <dbReference type="NCBI Taxonomy" id="266264"/>
    <lineage>
        <taxon>Bacteria</taxon>
        <taxon>Pseudomonadati</taxon>
        <taxon>Pseudomonadota</taxon>
        <taxon>Betaproteobacteria</taxon>
        <taxon>Burkholderiales</taxon>
        <taxon>Burkholderiaceae</taxon>
        <taxon>Cupriavidus</taxon>
    </lineage>
</organism>
<dbReference type="EC" id="7.1.1.-" evidence="1"/>
<dbReference type="EMBL" id="CP000352">
    <property type="protein sequence ID" value="ABF07820.1"/>
    <property type="molecule type" value="Genomic_DNA"/>
</dbReference>
<dbReference type="RefSeq" id="WP_008643351.1">
    <property type="nucleotide sequence ID" value="NC_007973.1"/>
</dbReference>
<dbReference type="SMR" id="Q1LPV6"/>
<dbReference type="STRING" id="266264.Rmet_0934"/>
<dbReference type="GeneID" id="60825421"/>
<dbReference type="KEGG" id="rme:Rmet_0934"/>
<dbReference type="eggNOG" id="COG1005">
    <property type="taxonomic scope" value="Bacteria"/>
</dbReference>
<dbReference type="HOGENOM" id="CLU_015134_0_1_4"/>
<dbReference type="Proteomes" id="UP000002429">
    <property type="component" value="Chromosome"/>
</dbReference>
<dbReference type="GO" id="GO:0005886">
    <property type="term" value="C:plasma membrane"/>
    <property type="evidence" value="ECO:0007669"/>
    <property type="project" value="UniProtKB-SubCell"/>
</dbReference>
<dbReference type="GO" id="GO:0003954">
    <property type="term" value="F:NADH dehydrogenase activity"/>
    <property type="evidence" value="ECO:0007669"/>
    <property type="project" value="TreeGrafter"/>
</dbReference>
<dbReference type="GO" id="GO:0016655">
    <property type="term" value="F:oxidoreductase activity, acting on NAD(P)H, quinone or similar compound as acceptor"/>
    <property type="evidence" value="ECO:0007669"/>
    <property type="project" value="UniProtKB-UniRule"/>
</dbReference>
<dbReference type="GO" id="GO:0048038">
    <property type="term" value="F:quinone binding"/>
    <property type="evidence" value="ECO:0007669"/>
    <property type="project" value="UniProtKB-KW"/>
</dbReference>
<dbReference type="GO" id="GO:0009060">
    <property type="term" value="P:aerobic respiration"/>
    <property type="evidence" value="ECO:0007669"/>
    <property type="project" value="TreeGrafter"/>
</dbReference>
<dbReference type="HAMAP" id="MF_01350">
    <property type="entry name" value="NDH1_NuoH"/>
    <property type="match status" value="1"/>
</dbReference>
<dbReference type="InterPro" id="IPR001694">
    <property type="entry name" value="NADH_UbQ_OxRdtase_su1/FPO"/>
</dbReference>
<dbReference type="InterPro" id="IPR018086">
    <property type="entry name" value="NADH_UbQ_OxRdtase_su1_CS"/>
</dbReference>
<dbReference type="NCBIfam" id="NF004741">
    <property type="entry name" value="PRK06076.1-2"/>
    <property type="match status" value="1"/>
</dbReference>
<dbReference type="NCBIfam" id="NF004742">
    <property type="entry name" value="PRK06076.1-3"/>
    <property type="match status" value="1"/>
</dbReference>
<dbReference type="NCBIfam" id="NF004745">
    <property type="entry name" value="PRK06076.1-6"/>
    <property type="match status" value="1"/>
</dbReference>
<dbReference type="PANTHER" id="PTHR11432">
    <property type="entry name" value="NADH DEHYDROGENASE SUBUNIT 1"/>
    <property type="match status" value="1"/>
</dbReference>
<dbReference type="PANTHER" id="PTHR11432:SF3">
    <property type="entry name" value="NADH-UBIQUINONE OXIDOREDUCTASE CHAIN 1"/>
    <property type="match status" value="1"/>
</dbReference>
<dbReference type="Pfam" id="PF00146">
    <property type="entry name" value="NADHdh"/>
    <property type="match status" value="1"/>
</dbReference>
<dbReference type="PROSITE" id="PS00668">
    <property type="entry name" value="COMPLEX1_ND1_2"/>
    <property type="match status" value="1"/>
</dbReference>
<protein>
    <recommendedName>
        <fullName evidence="1">NADH-quinone oxidoreductase subunit H</fullName>
        <ecNumber evidence="1">7.1.1.-</ecNumber>
    </recommendedName>
    <alternativeName>
        <fullName evidence="1">NADH dehydrogenase I subunit H</fullName>
    </alternativeName>
    <alternativeName>
        <fullName evidence="1">NDH-1 subunit H</fullName>
    </alternativeName>
</protein>
<keyword id="KW-0997">Cell inner membrane</keyword>
<keyword id="KW-1003">Cell membrane</keyword>
<keyword id="KW-0472">Membrane</keyword>
<keyword id="KW-0520">NAD</keyword>
<keyword id="KW-0874">Quinone</keyword>
<keyword id="KW-1185">Reference proteome</keyword>
<keyword id="KW-1278">Translocase</keyword>
<keyword id="KW-0812">Transmembrane</keyword>
<keyword id="KW-1133">Transmembrane helix</keyword>
<keyword id="KW-0830">Ubiquinone</keyword>
<name>NUOH_CUPMC</name>
<feature type="chain" id="PRO_0000298845" description="NADH-quinone oxidoreductase subunit H">
    <location>
        <begin position="1"/>
        <end position="354"/>
    </location>
</feature>
<feature type="transmembrane region" description="Helical" evidence="1">
    <location>
        <begin position="22"/>
        <end position="42"/>
    </location>
</feature>
<feature type="transmembrane region" description="Helical" evidence="1">
    <location>
        <begin position="91"/>
        <end position="111"/>
    </location>
</feature>
<feature type="transmembrane region" description="Helical" evidence="1">
    <location>
        <begin position="124"/>
        <end position="144"/>
    </location>
</feature>
<feature type="transmembrane region" description="Helical" evidence="1">
    <location>
        <begin position="162"/>
        <end position="182"/>
    </location>
</feature>
<feature type="transmembrane region" description="Helical" evidence="1">
    <location>
        <begin position="203"/>
        <end position="223"/>
    </location>
</feature>
<feature type="transmembrane region" description="Helical" evidence="1">
    <location>
        <begin position="250"/>
        <end position="270"/>
    </location>
</feature>
<feature type="transmembrane region" description="Helical" evidence="1">
    <location>
        <begin position="291"/>
        <end position="311"/>
    </location>
</feature>
<feature type="transmembrane region" description="Helical" evidence="1">
    <location>
        <begin position="326"/>
        <end position="346"/>
    </location>
</feature>
<evidence type="ECO:0000255" key="1">
    <source>
        <dbReference type="HAMAP-Rule" id="MF_01350"/>
    </source>
</evidence>